<feature type="chain" id="PRO_0000316631" description="Putative phosphoenolpyruvate synthase regulatory protein">
    <location>
        <begin position="1"/>
        <end position="272"/>
    </location>
</feature>
<feature type="binding site" evidence="1">
    <location>
        <begin position="152"/>
        <end position="159"/>
    </location>
    <ligand>
        <name>ADP</name>
        <dbReference type="ChEBI" id="CHEBI:456216"/>
    </ligand>
</feature>
<name>PSRP_ALCBS</name>
<comment type="function">
    <text evidence="1">Bifunctional serine/threonine kinase and phosphorylase involved in the regulation of the phosphoenolpyruvate synthase (PEPS) by catalyzing its phosphorylation/dephosphorylation.</text>
</comment>
<comment type="catalytic activity">
    <reaction evidence="1">
        <text>[pyruvate, water dikinase] + ADP = [pyruvate, water dikinase]-phosphate + AMP + H(+)</text>
        <dbReference type="Rhea" id="RHEA:46020"/>
        <dbReference type="Rhea" id="RHEA-COMP:11425"/>
        <dbReference type="Rhea" id="RHEA-COMP:11426"/>
        <dbReference type="ChEBI" id="CHEBI:15378"/>
        <dbReference type="ChEBI" id="CHEBI:43176"/>
        <dbReference type="ChEBI" id="CHEBI:68546"/>
        <dbReference type="ChEBI" id="CHEBI:456215"/>
        <dbReference type="ChEBI" id="CHEBI:456216"/>
        <dbReference type="EC" id="2.7.11.33"/>
    </reaction>
</comment>
<comment type="catalytic activity">
    <reaction evidence="1">
        <text>[pyruvate, water dikinase]-phosphate + phosphate + H(+) = [pyruvate, water dikinase] + diphosphate</text>
        <dbReference type="Rhea" id="RHEA:48580"/>
        <dbReference type="Rhea" id="RHEA-COMP:11425"/>
        <dbReference type="Rhea" id="RHEA-COMP:11426"/>
        <dbReference type="ChEBI" id="CHEBI:15378"/>
        <dbReference type="ChEBI" id="CHEBI:33019"/>
        <dbReference type="ChEBI" id="CHEBI:43176"/>
        <dbReference type="ChEBI" id="CHEBI:43474"/>
        <dbReference type="ChEBI" id="CHEBI:68546"/>
        <dbReference type="EC" id="2.7.4.28"/>
    </reaction>
</comment>
<comment type="similarity">
    <text evidence="1">Belongs to the pyruvate, phosphate/water dikinase regulatory protein family. PSRP subfamily.</text>
</comment>
<keyword id="KW-0418">Kinase</keyword>
<keyword id="KW-0547">Nucleotide-binding</keyword>
<keyword id="KW-1185">Reference proteome</keyword>
<keyword id="KW-0723">Serine/threonine-protein kinase</keyword>
<keyword id="KW-0808">Transferase</keyword>
<evidence type="ECO:0000255" key="1">
    <source>
        <dbReference type="HAMAP-Rule" id="MF_01062"/>
    </source>
</evidence>
<gene>
    <name type="ordered locus">ABO_1428</name>
</gene>
<accession>Q0VPM2</accession>
<reference key="1">
    <citation type="journal article" date="2006" name="Nat. Biotechnol.">
        <title>Genome sequence of the ubiquitous hydrocarbon-degrading marine bacterium Alcanivorax borkumensis.</title>
        <authorList>
            <person name="Schneiker S."/>
            <person name="Martins dos Santos V.A.P."/>
            <person name="Bartels D."/>
            <person name="Bekel T."/>
            <person name="Brecht M."/>
            <person name="Buhrmester J."/>
            <person name="Chernikova T.N."/>
            <person name="Denaro R."/>
            <person name="Ferrer M."/>
            <person name="Gertler C."/>
            <person name="Goesmann A."/>
            <person name="Golyshina O.V."/>
            <person name="Kaminski F."/>
            <person name="Khachane A.N."/>
            <person name="Lang S."/>
            <person name="Linke B."/>
            <person name="McHardy A.C."/>
            <person name="Meyer F."/>
            <person name="Nechitaylo T."/>
            <person name="Puehler A."/>
            <person name="Regenhardt D."/>
            <person name="Rupp O."/>
            <person name="Sabirova J.S."/>
            <person name="Selbitschka W."/>
            <person name="Yakimov M.M."/>
            <person name="Timmis K.N."/>
            <person name="Vorhoelter F.-J."/>
            <person name="Weidner S."/>
            <person name="Kaiser O."/>
            <person name="Golyshin P.N."/>
        </authorList>
    </citation>
    <scope>NUCLEOTIDE SEQUENCE [LARGE SCALE GENOMIC DNA]</scope>
    <source>
        <strain>ATCC 700651 / DSM 11573 / NCIMB 13689 / SK2</strain>
    </source>
</reference>
<sequence>MKRTAFYLSDGTGITAETLGHSMLSQFGSIEFIQVTLPFVQSDEQTREAVARINKAAKEDGAKPVVFSTLVNTDHRAILHGCDALILDLFGAFLRPLEDELGVRSSHKINQSHAIRDAESYRIRINAVHFALDNDDGARTRHYDQADIILIGVSRSGKTPTCLYLALQFGLFTANYPLTEDDFDDLRLPKALMEHKHKLFGLTIDADRLSAIRSERKAGSKYASPRQCDMELRALEAMYNKHNIPYLDATELSIEEISTRVLAMKGLKRRLQ</sequence>
<proteinExistence type="inferred from homology"/>
<dbReference type="EC" id="2.7.11.33" evidence="1"/>
<dbReference type="EC" id="2.7.4.28" evidence="1"/>
<dbReference type="EMBL" id="AM286690">
    <property type="protein sequence ID" value="CAL16876.1"/>
    <property type="molecule type" value="Genomic_DNA"/>
</dbReference>
<dbReference type="RefSeq" id="WP_011588709.1">
    <property type="nucleotide sequence ID" value="NC_008260.1"/>
</dbReference>
<dbReference type="SMR" id="Q0VPM2"/>
<dbReference type="STRING" id="393595.ABO_1428"/>
<dbReference type="KEGG" id="abo:ABO_1428"/>
<dbReference type="eggNOG" id="COG1806">
    <property type="taxonomic scope" value="Bacteria"/>
</dbReference>
<dbReference type="HOGENOM" id="CLU_046206_1_0_6"/>
<dbReference type="OrthoDB" id="9782201at2"/>
<dbReference type="Proteomes" id="UP000008871">
    <property type="component" value="Chromosome"/>
</dbReference>
<dbReference type="GO" id="GO:0043531">
    <property type="term" value="F:ADP binding"/>
    <property type="evidence" value="ECO:0007669"/>
    <property type="project" value="UniProtKB-UniRule"/>
</dbReference>
<dbReference type="GO" id="GO:0005524">
    <property type="term" value="F:ATP binding"/>
    <property type="evidence" value="ECO:0007669"/>
    <property type="project" value="InterPro"/>
</dbReference>
<dbReference type="GO" id="GO:0016776">
    <property type="term" value="F:phosphotransferase activity, phosphate group as acceptor"/>
    <property type="evidence" value="ECO:0007669"/>
    <property type="project" value="UniProtKB-UniRule"/>
</dbReference>
<dbReference type="GO" id="GO:0004674">
    <property type="term" value="F:protein serine/threonine kinase activity"/>
    <property type="evidence" value="ECO:0007669"/>
    <property type="project" value="UniProtKB-UniRule"/>
</dbReference>
<dbReference type="HAMAP" id="MF_01062">
    <property type="entry name" value="PSRP"/>
    <property type="match status" value="1"/>
</dbReference>
<dbReference type="InterPro" id="IPR005177">
    <property type="entry name" value="Kinase-pyrophosphorylase"/>
</dbReference>
<dbReference type="InterPro" id="IPR026530">
    <property type="entry name" value="PSRP"/>
</dbReference>
<dbReference type="NCBIfam" id="NF003742">
    <property type="entry name" value="PRK05339.1"/>
    <property type="match status" value="1"/>
</dbReference>
<dbReference type="PANTHER" id="PTHR31756">
    <property type="entry name" value="PYRUVATE, PHOSPHATE DIKINASE REGULATORY PROTEIN 1, CHLOROPLASTIC"/>
    <property type="match status" value="1"/>
</dbReference>
<dbReference type="PANTHER" id="PTHR31756:SF3">
    <property type="entry name" value="PYRUVATE, PHOSPHATE DIKINASE REGULATORY PROTEIN 1, CHLOROPLASTIC"/>
    <property type="match status" value="1"/>
</dbReference>
<dbReference type="Pfam" id="PF03618">
    <property type="entry name" value="Kinase-PPPase"/>
    <property type="match status" value="1"/>
</dbReference>
<protein>
    <recommendedName>
        <fullName evidence="1">Putative phosphoenolpyruvate synthase regulatory protein</fullName>
        <shortName evidence="1">PEP synthase regulatory protein</shortName>
        <shortName evidence="1">PSRP</shortName>
        <ecNumber evidence="1">2.7.11.33</ecNumber>
        <ecNumber evidence="1">2.7.4.28</ecNumber>
    </recommendedName>
    <alternativeName>
        <fullName evidence="1">Pyruvate, water dikinase regulatory protein</fullName>
    </alternativeName>
</protein>
<organism>
    <name type="scientific">Alcanivorax borkumensis (strain ATCC 700651 / DSM 11573 / NCIMB 13689 / SK2)</name>
    <dbReference type="NCBI Taxonomy" id="393595"/>
    <lineage>
        <taxon>Bacteria</taxon>
        <taxon>Pseudomonadati</taxon>
        <taxon>Pseudomonadota</taxon>
        <taxon>Gammaproteobacteria</taxon>
        <taxon>Oceanospirillales</taxon>
        <taxon>Alcanivoracaceae</taxon>
        <taxon>Alcanivorax</taxon>
    </lineage>
</organism>